<feature type="chain" id="PRO_1000020352" description="Threonine--tRNA ligase">
    <location>
        <begin position="1"/>
        <end position="635"/>
    </location>
</feature>
<feature type="domain" description="TGS" evidence="2">
    <location>
        <begin position="1"/>
        <end position="61"/>
    </location>
</feature>
<feature type="region of interest" description="Catalytic" evidence="1">
    <location>
        <begin position="242"/>
        <end position="533"/>
    </location>
</feature>
<feature type="binding site" evidence="1">
    <location>
        <position position="333"/>
    </location>
    <ligand>
        <name>Zn(2+)</name>
        <dbReference type="ChEBI" id="CHEBI:29105"/>
    </ligand>
</feature>
<feature type="binding site" evidence="1">
    <location>
        <position position="384"/>
    </location>
    <ligand>
        <name>Zn(2+)</name>
        <dbReference type="ChEBI" id="CHEBI:29105"/>
    </ligand>
</feature>
<feature type="binding site" evidence="1">
    <location>
        <position position="510"/>
    </location>
    <ligand>
        <name>Zn(2+)</name>
        <dbReference type="ChEBI" id="CHEBI:29105"/>
    </ligand>
</feature>
<organism>
    <name type="scientific">Burkholderia mallei (strain NCTC 10247)</name>
    <dbReference type="NCBI Taxonomy" id="320389"/>
    <lineage>
        <taxon>Bacteria</taxon>
        <taxon>Pseudomonadati</taxon>
        <taxon>Pseudomonadota</taxon>
        <taxon>Betaproteobacteria</taxon>
        <taxon>Burkholderiales</taxon>
        <taxon>Burkholderiaceae</taxon>
        <taxon>Burkholderia</taxon>
        <taxon>pseudomallei group</taxon>
    </lineage>
</organism>
<comment type="function">
    <text evidence="1">Catalyzes the attachment of threonine to tRNA(Thr) in a two-step reaction: L-threonine is first activated by ATP to form Thr-AMP and then transferred to the acceptor end of tRNA(Thr). Also edits incorrectly charged L-seryl-tRNA(Thr).</text>
</comment>
<comment type="catalytic activity">
    <reaction evidence="1">
        <text>tRNA(Thr) + L-threonine + ATP = L-threonyl-tRNA(Thr) + AMP + diphosphate + H(+)</text>
        <dbReference type="Rhea" id="RHEA:24624"/>
        <dbReference type="Rhea" id="RHEA-COMP:9670"/>
        <dbReference type="Rhea" id="RHEA-COMP:9704"/>
        <dbReference type="ChEBI" id="CHEBI:15378"/>
        <dbReference type="ChEBI" id="CHEBI:30616"/>
        <dbReference type="ChEBI" id="CHEBI:33019"/>
        <dbReference type="ChEBI" id="CHEBI:57926"/>
        <dbReference type="ChEBI" id="CHEBI:78442"/>
        <dbReference type="ChEBI" id="CHEBI:78534"/>
        <dbReference type="ChEBI" id="CHEBI:456215"/>
        <dbReference type="EC" id="6.1.1.3"/>
    </reaction>
</comment>
<comment type="cofactor">
    <cofactor evidence="1">
        <name>Zn(2+)</name>
        <dbReference type="ChEBI" id="CHEBI:29105"/>
    </cofactor>
    <text evidence="1">Binds 1 zinc ion per subunit.</text>
</comment>
<comment type="subunit">
    <text evidence="1">Homodimer.</text>
</comment>
<comment type="subcellular location">
    <subcellularLocation>
        <location evidence="1">Cytoplasm</location>
    </subcellularLocation>
</comment>
<comment type="similarity">
    <text evidence="1">Belongs to the class-II aminoacyl-tRNA synthetase family.</text>
</comment>
<dbReference type="EC" id="6.1.1.3" evidence="1"/>
<dbReference type="EMBL" id="CP000548">
    <property type="protein sequence ID" value="ABO05312.1"/>
    <property type="molecule type" value="Genomic_DNA"/>
</dbReference>
<dbReference type="RefSeq" id="WP_004191232.1">
    <property type="nucleotide sequence ID" value="NZ_CP007802.1"/>
</dbReference>
<dbReference type="SMR" id="A3MJT8"/>
<dbReference type="GeneID" id="93060046"/>
<dbReference type="KEGG" id="bmaz:BM44_2123"/>
<dbReference type="KEGG" id="bmn:BMA10247_0963"/>
<dbReference type="PATRIC" id="fig|320389.8.peg.2378"/>
<dbReference type="GO" id="GO:0005829">
    <property type="term" value="C:cytosol"/>
    <property type="evidence" value="ECO:0007669"/>
    <property type="project" value="TreeGrafter"/>
</dbReference>
<dbReference type="GO" id="GO:0005524">
    <property type="term" value="F:ATP binding"/>
    <property type="evidence" value="ECO:0007669"/>
    <property type="project" value="UniProtKB-UniRule"/>
</dbReference>
<dbReference type="GO" id="GO:0046872">
    <property type="term" value="F:metal ion binding"/>
    <property type="evidence" value="ECO:0007669"/>
    <property type="project" value="UniProtKB-KW"/>
</dbReference>
<dbReference type="GO" id="GO:0004829">
    <property type="term" value="F:threonine-tRNA ligase activity"/>
    <property type="evidence" value="ECO:0007669"/>
    <property type="project" value="UniProtKB-UniRule"/>
</dbReference>
<dbReference type="GO" id="GO:0000049">
    <property type="term" value="F:tRNA binding"/>
    <property type="evidence" value="ECO:0007669"/>
    <property type="project" value="UniProtKB-KW"/>
</dbReference>
<dbReference type="GO" id="GO:0006435">
    <property type="term" value="P:threonyl-tRNA aminoacylation"/>
    <property type="evidence" value="ECO:0007669"/>
    <property type="project" value="UniProtKB-UniRule"/>
</dbReference>
<dbReference type="CDD" id="cd01667">
    <property type="entry name" value="TGS_ThrRS"/>
    <property type="match status" value="1"/>
</dbReference>
<dbReference type="CDD" id="cd00860">
    <property type="entry name" value="ThrRS_anticodon"/>
    <property type="match status" value="1"/>
</dbReference>
<dbReference type="CDD" id="cd00771">
    <property type="entry name" value="ThrRS_core"/>
    <property type="match status" value="1"/>
</dbReference>
<dbReference type="FunFam" id="3.10.20.30:FF:000005">
    <property type="entry name" value="Threonine--tRNA ligase"/>
    <property type="match status" value="1"/>
</dbReference>
<dbReference type="FunFam" id="3.30.54.20:FF:000002">
    <property type="entry name" value="Threonine--tRNA ligase"/>
    <property type="match status" value="1"/>
</dbReference>
<dbReference type="FunFam" id="3.30.930.10:FF:000002">
    <property type="entry name" value="Threonine--tRNA ligase"/>
    <property type="match status" value="1"/>
</dbReference>
<dbReference type="FunFam" id="3.40.50.800:FF:000001">
    <property type="entry name" value="Threonine--tRNA ligase"/>
    <property type="match status" value="1"/>
</dbReference>
<dbReference type="FunFam" id="3.30.980.10:FF:000005">
    <property type="entry name" value="Threonyl-tRNA synthetase, mitochondrial"/>
    <property type="match status" value="1"/>
</dbReference>
<dbReference type="Gene3D" id="3.10.20.30">
    <property type="match status" value="1"/>
</dbReference>
<dbReference type="Gene3D" id="3.30.54.20">
    <property type="match status" value="1"/>
</dbReference>
<dbReference type="Gene3D" id="3.40.50.800">
    <property type="entry name" value="Anticodon-binding domain"/>
    <property type="match status" value="1"/>
</dbReference>
<dbReference type="Gene3D" id="3.30.930.10">
    <property type="entry name" value="Bira Bifunctional Protein, Domain 2"/>
    <property type="match status" value="1"/>
</dbReference>
<dbReference type="Gene3D" id="3.30.980.10">
    <property type="entry name" value="Threonyl-trna Synthetase, Chain A, domain 2"/>
    <property type="match status" value="1"/>
</dbReference>
<dbReference type="HAMAP" id="MF_00184">
    <property type="entry name" value="Thr_tRNA_synth"/>
    <property type="match status" value="1"/>
</dbReference>
<dbReference type="InterPro" id="IPR002314">
    <property type="entry name" value="aa-tRNA-synt_IIb"/>
</dbReference>
<dbReference type="InterPro" id="IPR006195">
    <property type="entry name" value="aa-tRNA-synth_II"/>
</dbReference>
<dbReference type="InterPro" id="IPR045864">
    <property type="entry name" value="aa-tRNA-synth_II/BPL/LPL"/>
</dbReference>
<dbReference type="InterPro" id="IPR004154">
    <property type="entry name" value="Anticodon-bd"/>
</dbReference>
<dbReference type="InterPro" id="IPR036621">
    <property type="entry name" value="Anticodon-bd_dom_sf"/>
</dbReference>
<dbReference type="InterPro" id="IPR012675">
    <property type="entry name" value="Beta-grasp_dom_sf"/>
</dbReference>
<dbReference type="InterPro" id="IPR004095">
    <property type="entry name" value="TGS"/>
</dbReference>
<dbReference type="InterPro" id="IPR012676">
    <property type="entry name" value="TGS-like"/>
</dbReference>
<dbReference type="InterPro" id="IPR002320">
    <property type="entry name" value="Thr-tRNA-ligase_IIa"/>
</dbReference>
<dbReference type="InterPro" id="IPR018163">
    <property type="entry name" value="Thr/Ala-tRNA-synth_IIc_edit"/>
</dbReference>
<dbReference type="InterPro" id="IPR047246">
    <property type="entry name" value="ThrRS_anticodon"/>
</dbReference>
<dbReference type="InterPro" id="IPR033728">
    <property type="entry name" value="ThrRS_core"/>
</dbReference>
<dbReference type="InterPro" id="IPR012947">
    <property type="entry name" value="tRNA_SAD"/>
</dbReference>
<dbReference type="NCBIfam" id="TIGR00418">
    <property type="entry name" value="thrS"/>
    <property type="match status" value="1"/>
</dbReference>
<dbReference type="PANTHER" id="PTHR11451:SF44">
    <property type="entry name" value="THREONINE--TRNA LIGASE, CHLOROPLASTIC_MITOCHONDRIAL 2"/>
    <property type="match status" value="1"/>
</dbReference>
<dbReference type="PANTHER" id="PTHR11451">
    <property type="entry name" value="THREONINE-TRNA LIGASE"/>
    <property type="match status" value="1"/>
</dbReference>
<dbReference type="Pfam" id="PF03129">
    <property type="entry name" value="HGTP_anticodon"/>
    <property type="match status" value="1"/>
</dbReference>
<dbReference type="Pfam" id="PF02824">
    <property type="entry name" value="TGS"/>
    <property type="match status" value="1"/>
</dbReference>
<dbReference type="Pfam" id="PF00587">
    <property type="entry name" value="tRNA-synt_2b"/>
    <property type="match status" value="1"/>
</dbReference>
<dbReference type="Pfam" id="PF07973">
    <property type="entry name" value="tRNA_SAD"/>
    <property type="match status" value="1"/>
</dbReference>
<dbReference type="PRINTS" id="PR01047">
    <property type="entry name" value="TRNASYNTHTHR"/>
</dbReference>
<dbReference type="SMART" id="SM00863">
    <property type="entry name" value="tRNA_SAD"/>
    <property type="match status" value="1"/>
</dbReference>
<dbReference type="SUPFAM" id="SSF52954">
    <property type="entry name" value="Class II aaRS ABD-related"/>
    <property type="match status" value="1"/>
</dbReference>
<dbReference type="SUPFAM" id="SSF55681">
    <property type="entry name" value="Class II aaRS and biotin synthetases"/>
    <property type="match status" value="1"/>
</dbReference>
<dbReference type="SUPFAM" id="SSF81271">
    <property type="entry name" value="TGS-like"/>
    <property type="match status" value="1"/>
</dbReference>
<dbReference type="SUPFAM" id="SSF55186">
    <property type="entry name" value="ThrRS/AlaRS common domain"/>
    <property type="match status" value="1"/>
</dbReference>
<dbReference type="PROSITE" id="PS50862">
    <property type="entry name" value="AA_TRNA_LIGASE_II"/>
    <property type="match status" value="1"/>
</dbReference>
<dbReference type="PROSITE" id="PS51880">
    <property type="entry name" value="TGS"/>
    <property type="match status" value="1"/>
</dbReference>
<protein>
    <recommendedName>
        <fullName evidence="1">Threonine--tRNA ligase</fullName>
        <ecNumber evidence="1">6.1.1.3</ecNumber>
    </recommendedName>
    <alternativeName>
        <fullName evidence="1">Threonyl-tRNA synthetase</fullName>
        <shortName evidence="1">ThrRS</shortName>
    </alternativeName>
</protein>
<accession>A3MJT8</accession>
<gene>
    <name evidence="1" type="primary">thrS</name>
    <name type="ordered locus">BMA10247_0963</name>
</gene>
<sequence>MVSIRLPDGSVRQYEHPVTVAEVAASIGPGLAKAALGGKLDGELVDTSALIDRDASLAIVTDKDADGLDIIRHSTAHLLAYAVKELHPDAQVTIGPVIDNGFYYDFSYHRPFTPEDLEAIEKRMQELAKRDEPVTRRVVSRDEAVSYFRSIGEKYKAEIIESIPASDEIKLYSHGSFTDLCRGPHVPSTGKLKVFKLMKVAGAYWRGDSKNEQLQRIYGTAWTRKEDQDAYLHMLEEAEKRDHRKLGKQLDLFHIQEEAPGMVFWHPKGWTLWQQVEQYMRRRLDAAGYLEIKTPMIMDRSLWEASGHWQNYRENMFTTESEKRDYAIKPMNCPGHVQVFKHGLRSYRDLPLRYAEFGSCHRNEASGALHGLMRVRGFVQDDAHIFCTEDQINSEAIAFNKLAMSVYEDFGFDRIDIKLSLRPEQRMGSDETWDHAEEGLRNALKACGLEWEELPGEGAFYGPKIEYHIKDALGRSWQCGTLQLDMMLPERLGAEYVAEDNSRRRPVMLHRAIVGSMERFLGILIEHHAGAMPVWLAPAHAVVLNIAESQAEYARTVAQSLQKQGLRVSADLRNEKISYKIREHTLEKVPYLLVVGDKEREAQTVAVRARGGVDLGVMPVEAFVERLREDIQAFK</sequence>
<proteinExistence type="inferred from homology"/>
<keyword id="KW-0030">Aminoacyl-tRNA synthetase</keyword>
<keyword id="KW-0067">ATP-binding</keyword>
<keyword id="KW-0963">Cytoplasm</keyword>
<keyword id="KW-0436">Ligase</keyword>
<keyword id="KW-0479">Metal-binding</keyword>
<keyword id="KW-0547">Nucleotide-binding</keyword>
<keyword id="KW-0648">Protein biosynthesis</keyword>
<keyword id="KW-0694">RNA-binding</keyword>
<keyword id="KW-0820">tRNA-binding</keyword>
<keyword id="KW-0862">Zinc</keyword>
<reference key="1">
    <citation type="journal article" date="2010" name="Genome Biol. Evol.">
        <title>Continuing evolution of Burkholderia mallei through genome reduction and large-scale rearrangements.</title>
        <authorList>
            <person name="Losada L."/>
            <person name="Ronning C.M."/>
            <person name="DeShazer D."/>
            <person name="Woods D."/>
            <person name="Fedorova N."/>
            <person name="Kim H.S."/>
            <person name="Shabalina S.A."/>
            <person name="Pearson T.R."/>
            <person name="Brinkac L."/>
            <person name="Tan P."/>
            <person name="Nandi T."/>
            <person name="Crabtree J."/>
            <person name="Badger J."/>
            <person name="Beckstrom-Sternberg S."/>
            <person name="Saqib M."/>
            <person name="Schutzer S.E."/>
            <person name="Keim P."/>
            <person name="Nierman W.C."/>
        </authorList>
    </citation>
    <scope>NUCLEOTIDE SEQUENCE [LARGE SCALE GENOMIC DNA]</scope>
    <source>
        <strain>NCTC 10247</strain>
    </source>
</reference>
<evidence type="ECO:0000255" key="1">
    <source>
        <dbReference type="HAMAP-Rule" id="MF_00184"/>
    </source>
</evidence>
<evidence type="ECO:0000255" key="2">
    <source>
        <dbReference type="PROSITE-ProRule" id="PRU01228"/>
    </source>
</evidence>
<name>SYT_BURM7</name>